<organism>
    <name type="scientific">Ralstonia nicotianae (strain ATCC BAA-1114 / GMI1000)</name>
    <name type="common">Ralstonia solanacearum</name>
    <dbReference type="NCBI Taxonomy" id="267608"/>
    <lineage>
        <taxon>Bacteria</taxon>
        <taxon>Pseudomonadati</taxon>
        <taxon>Pseudomonadota</taxon>
        <taxon>Betaproteobacteria</taxon>
        <taxon>Burkholderiales</taxon>
        <taxon>Burkholderiaceae</taxon>
        <taxon>Ralstonia</taxon>
        <taxon>Ralstonia solanacearum species complex</taxon>
    </lineage>
</organism>
<name>SDHE_RALN1</name>
<sequence>MTAVNTSTFSHQSDPHRRARLRWRARRGLLENDIIVERFFNRYETELSDDDVGALTQLFELPDNDLMDLLLARKEPEGALDVPSVRHVLSLLRAV</sequence>
<feature type="chain" id="PRO_0000214418" description="FAD assembly factor SdhE">
    <location>
        <begin position="1"/>
        <end position="95"/>
    </location>
</feature>
<dbReference type="EMBL" id="AL646052">
    <property type="protein sequence ID" value="CAD15694.1"/>
    <property type="molecule type" value="Genomic_DNA"/>
</dbReference>
<dbReference type="RefSeq" id="WP_011001928.1">
    <property type="nucleotide sequence ID" value="NC_003295.1"/>
</dbReference>
<dbReference type="SMR" id="Q8XXX1"/>
<dbReference type="STRING" id="267608.RSc1992"/>
<dbReference type="EnsemblBacteria" id="CAD15694">
    <property type="protein sequence ID" value="CAD15694"/>
    <property type="gene ID" value="RSc1992"/>
</dbReference>
<dbReference type="KEGG" id="rso:RSc1992"/>
<dbReference type="eggNOG" id="COG2938">
    <property type="taxonomic scope" value="Bacteria"/>
</dbReference>
<dbReference type="HOGENOM" id="CLU_103054_2_3_4"/>
<dbReference type="Proteomes" id="UP000001436">
    <property type="component" value="Chromosome"/>
</dbReference>
<dbReference type="GO" id="GO:0005737">
    <property type="term" value="C:cytoplasm"/>
    <property type="evidence" value="ECO:0007669"/>
    <property type="project" value="UniProtKB-SubCell"/>
</dbReference>
<dbReference type="GO" id="GO:0006105">
    <property type="term" value="P:succinate metabolic process"/>
    <property type="evidence" value="ECO:0007669"/>
    <property type="project" value="TreeGrafter"/>
</dbReference>
<dbReference type="Gene3D" id="1.10.150.250">
    <property type="entry name" value="Flavinator of succinate dehydrogenase"/>
    <property type="match status" value="1"/>
</dbReference>
<dbReference type="InterPro" id="IPR005631">
    <property type="entry name" value="SDH"/>
</dbReference>
<dbReference type="InterPro" id="IPR036714">
    <property type="entry name" value="SDH_sf"/>
</dbReference>
<dbReference type="InterPro" id="IPR050531">
    <property type="entry name" value="SdhE_FAD_assembly_factor"/>
</dbReference>
<dbReference type="PANTHER" id="PTHR39585">
    <property type="entry name" value="FAD ASSEMBLY FACTOR SDHE"/>
    <property type="match status" value="1"/>
</dbReference>
<dbReference type="PANTHER" id="PTHR39585:SF1">
    <property type="entry name" value="FAD ASSEMBLY FACTOR SDHE"/>
    <property type="match status" value="1"/>
</dbReference>
<dbReference type="Pfam" id="PF03937">
    <property type="entry name" value="Sdh5"/>
    <property type="match status" value="1"/>
</dbReference>
<dbReference type="SUPFAM" id="SSF109910">
    <property type="entry name" value="YgfY-like"/>
    <property type="match status" value="1"/>
</dbReference>
<comment type="function">
    <text evidence="1">An FAD assembly protein, which accelerates covalent attachment of the cofactor into other proteins. Plays an essential role in the assembly of succinate dehydrogenase (SDH, respiratory complex II), an enzyme complex that is a component of both the tricarboxylic acid cycle and the electron transport chain, and which couples the oxidation of succinate to fumarate with the reduction of ubiquinone (coenzyme Q) to ubiquinol. Required for flavinylation (covalent attachment of FAD) of the flavoprotein subunit SdhA of SDH and other flavinylated proteins as well.</text>
</comment>
<comment type="subcellular location">
    <subcellularLocation>
        <location evidence="1">Cytoplasm</location>
    </subcellularLocation>
</comment>
<comment type="similarity">
    <text evidence="2">Belongs to the SdhE FAD assembly factor family.</text>
</comment>
<accession>Q8XXX1</accession>
<gene>
    <name type="primary">sdhE</name>
    <name type="ordered locus">RSc1992</name>
    <name type="ORF">RS03560</name>
</gene>
<protein>
    <recommendedName>
        <fullName>FAD assembly factor SdhE</fullName>
    </recommendedName>
</protein>
<keyword id="KW-0143">Chaperone</keyword>
<keyword id="KW-0963">Cytoplasm</keyword>
<keyword id="KW-1185">Reference proteome</keyword>
<evidence type="ECO:0000250" key="1">
    <source>
        <dbReference type="UniProtKB" id="G4V4G2"/>
    </source>
</evidence>
<evidence type="ECO:0000305" key="2"/>
<proteinExistence type="inferred from homology"/>
<reference key="1">
    <citation type="journal article" date="2002" name="Nature">
        <title>Genome sequence of the plant pathogen Ralstonia solanacearum.</title>
        <authorList>
            <person name="Salanoubat M."/>
            <person name="Genin S."/>
            <person name="Artiguenave F."/>
            <person name="Gouzy J."/>
            <person name="Mangenot S."/>
            <person name="Arlat M."/>
            <person name="Billault A."/>
            <person name="Brottier P."/>
            <person name="Camus J.-C."/>
            <person name="Cattolico L."/>
            <person name="Chandler M."/>
            <person name="Choisne N."/>
            <person name="Claudel-Renard C."/>
            <person name="Cunnac S."/>
            <person name="Demange N."/>
            <person name="Gaspin C."/>
            <person name="Lavie M."/>
            <person name="Moisan A."/>
            <person name="Robert C."/>
            <person name="Saurin W."/>
            <person name="Schiex T."/>
            <person name="Siguier P."/>
            <person name="Thebault P."/>
            <person name="Whalen M."/>
            <person name="Wincker P."/>
            <person name="Levy M."/>
            <person name="Weissenbach J."/>
            <person name="Boucher C.A."/>
        </authorList>
    </citation>
    <scope>NUCLEOTIDE SEQUENCE [LARGE SCALE GENOMIC DNA]</scope>
    <source>
        <strain>ATCC BAA-1114 / GMI1000</strain>
    </source>
</reference>